<reference key="1">
    <citation type="journal article" date="2001" name="J. Biol. Chem.">
        <title>Beta-amyloid peptide-induced apoptosis regulated by a novel protein containing a G protein activation module.</title>
        <authorList>
            <person name="Kajkowski E.M."/>
            <person name="Lo C.F."/>
            <person name="Ning X."/>
            <person name="Walker S."/>
            <person name="Sofia H.J."/>
            <person name="Wang W."/>
            <person name="Edris W."/>
            <person name="Chanda P."/>
            <person name="Wagner E."/>
            <person name="Vile S."/>
            <person name="Ryan K."/>
            <person name="McHendry-Rinde B."/>
            <person name="Smith S.C."/>
            <person name="Wood A."/>
            <person name="Rhodes K.J."/>
            <person name="Kennedy J.D."/>
            <person name="Bard J."/>
            <person name="Jacobsen J.S."/>
            <person name="Ozenberger B.A."/>
        </authorList>
    </citation>
    <scope>NUCLEOTIDE SEQUENCE [MRNA]</scope>
    <scope>PROTEIN SEQUENCE OF N-TERMINUS</scope>
    <scope>FUNCTION</scope>
    <scope>SUBCELLULAR LOCATION</scope>
    <scope>GLYCOSYLATION</scope>
    <scope>TISSUE SPECIFICITY</scope>
    <scope>INTERACTION WITH APP</scope>
</reference>
<reference key="2">
    <citation type="journal article" date="2006" name="Nature">
        <title>The DNA sequence and biological annotation of human chromosome 1.</title>
        <authorList>
            <person name="Gregory S.G."/>
            <person name="Barlow K.F."/>
            <person name="McLay K.E."/>
            <person name="Kaul R."/>
            <person name="Swarbreck D."/>
            <person name="Dunham A."/>
            <person name="Scott C.E."/>
            <person name="Howe K.L."/>
            <person name="Woodfine K."/>
            <person name="Spencer C.C.A."/>
            <person name="Jones M.C."/>
            <person name="Gillson C."/>
            <person name="Searle S."/>
            <person name="Zhou Y."/>
            <person name="Kokocinski F."/>
            <person name="McDonald L."/>
            <person name="Evans R."/>
            <person name="Phillips K."/>
            <person name="Atkinson A."/>
            <person name="Cooper R."/>
            <person name="Jones C."/>
            <person name="Hall R.E."/>
            <person name="Andrews T.D."/>
            <person name="Lloyd C."/>
            <person name="Ainscough R."/>
            <person name="Almeida J.P."/>
            <person name="Ambrose K.D."/>
            <person name="Anderson F."/>
            <person name="Andrew R.W."/>
            <person name="Ashwell R.I.S."/>
            <person name="Aubin K."/>
            <person name="Babbage A.K."/>
            <person name="Bagguley C.L."/>
            <person name="Bailey J."/>
            <person name="Beasley H."/>
            <person name="Bethel G."/>
            <person name="Bird C.P."/>
            <person name="Bray-Allen S."/>
            <person name="Brown J.Y."/>
            <person name="Brown A.J."/>
            <person name="Buckley D."/>
            <person name="Burton J."/>
            <person name="Bye J."/>
            <person name="Carder C."/>
            <person name="Chapman J.C."/>
            <person name="Clark S.Y."/>
            <person name="Clarke G."/>
            <person name="Clee C."/>
            <person name="Cobley V."/>
            <person name="Collier R.E."/>
            <person name="Corby N."/>
            <person name="Coville G.J."/>
            <person name="Davies J."/>
            <person name="Deadman R."/>
            <person name="Dunn M."/>
            <person name="Earthrowl M."/>
            <person name="Ellington A.G."/>
            <person name="Errington H."/>
            <person name="Frankish A."/>
            <person name="Frankland J."/>
            <person name="French L."/>
            <person name="Garner P."/>
            <person name="Garnett J."/>
            <person name="Gay L."/>
            <person name="Ghori M.R.J."/>
            <person name="Gibson R."/>
            <person name="Gilby L.M."/>
            <person name="Gillett W."/>
            <person name="Glithero R.J."/>
            <person name="Grafham D.V."/>
            <person name="Griffiths C."/>
            <person name="Griffiths-Jones S."/>
            <person name="Grocock R."/>
            <person name="Hammond S."/>
            <person name="Harrison E.S.I."/>
            <person name="Hart E."/>
            <person name="Haugen E."/>
            <person name="Heath P.D."/>
            <person name="Holmes S."/>
            <person name="Holt K."/>
            <person name="Howden P.J."/>
            <person name="Hunt A.R."/>
            <person name="Hunt S.E."/>
            <person name="Hunter G."/>
            <person name="Isherwood J."/>
            <person name="James R."/>
            <person name="Johnson C."/>
            <person name="Johnson D."/>
            <person name="Joy A."/>
            <person name="Kay M."/>
            <person name="Kershaw J.K."/>
            <person name="Kibukawa M."/>
            <person name="Kimberley A.M."/>
            <person name="King A."/>
            <person name="Knights A.J."/>
            <person name="Lad H."/>
            <person name="Laird G."/>
            <person name="Lawlor S."/>
            <person name="Leongamornlert D.A."/>
            <person name="Lloyd D.M."/>
            <person name="Loveland J."/>
            <person name="Lovell J."/>
            <person name="Lush M.J."/>
            <person name="Lyne R."/>
            <person name="Martin S."/>
            <person name="Mashreghi-Mohammadi M."/>
            <person name="Matthews L."/>
            <person name="Matthews N.S.W."/>
            <person name="McLaren S."/>
            <person name="Milne S."/>
            <person name="Mistry S."/>
            <person name="Moore M.J.F."/>
            <person name="Nickerson T."/>
            <person name="O'Dell C.N."/>
            <person name="Oliver K."/>
            <person name="Palmeiri A."/>
            <person name="Palmer S.A."/>
            <person name="Parker A."/>
            <person name="Patel D."/>
            <person name="Pearce A.V."/>
            <person name="Peck A.I."/>
            <person name="Pelan S."/>
            <person name="Phelps K."/>
            <person name="Phillimore B.J."/>
            <person name="Plumb R."/>
            <person name="Rajan J."/>
            <person name="Raymond C."/>
            <person name="Rouse G."/>
            <person name="Saenphimmachak C."/>
            <person name="Sehra H.K."/>
            <person name="Sheridan E."/>
            <person name="Shownkeen R."/>
            <person name="Sims S."/>
            <person name="Skuce C.D."/>
            <person name="Smith M."/>
            <person name="Steward C."/>
            <person name="Subramanian S."/>
            <person name="Sycamore N."/>
            <person name="Tracey A."/>
            <person name="Tromans A."/>
            <person name="Van Helmond Z."/>
            <person name="Wall M."/>
            <person name="Wallis J.M."/>
            <person name="White S."/>
            <person name="Whitehead S.L."/>
            <person name="Wilkinson J.E."/>
            <person name="Willey D.L."/>
            <person name="Williams H."/>
            <person name="Wilming L."/>
            <person name="Wray P.W."/>
            <person name="Wu Z."/>
            <person name="Coulson A."/>
            <person name="Vaudin M."/>
            <person name="Sulston J.E."/>
            <person name="Durbin R.M."/>
            <person name="Hubbard T."/>
            <person name="Wooster R."/>
            <person name="Dunham I."/>
            <person name="Carter N.P."/>
            <person name="McVean G."/>
            <person name="Ross M.T."/>
            <person name="Harrow J."/>
            <person name="Olson M.V."/>
            <person name="Beck S."/>
            <person name="Rogers J."/>
            <person name="Bentley D.R."/>
        </authorList>
    </citation>
    <scope>NUCLEOTIDE SEQUENCE [LARGE SCALE GENOMIC DNA]</scope>
</reference>
<reference key="3">
    <citation type="journal article" date="2004" name="Genome Res.">
        <title>The status, quality, and expansion of the NIH full-length cDNA project: the Mammalian Gene Collection (MGC).</title>
        <authorList>
            <consortium name="The MGC Project Team"/>
        </authorList>
    </citation>
    <scope>NUCLEOTIDE SEQUENCE [LARGE SCALE MRNA]</scope>
    <source>
        <tissue>Testis</tissue>
    </source>
</reference>
<reference key="4">
    <citation type="journal article" date="2003" name="J. Neurosci. Res.">
        <title>Beta-amyloid peptide binding protein does not couple to G protein in a heterologous Xenopus expression system.</title>
        <authorList>
            <person name="Lee Y."/>
            <person name="Chang D.-J."/>
            <person name="Lee Y.-S."/>
            <person name="Chang K.-A."/>
            <person name="Kim H."/>
            <person name="Yoon J.-S."/>
            <person name="Lee S."/>
            <person name="Suh Y.-H."/>
            <person name="Kaang B.-K."/>
        </authorList>
    </citation>
    <scope>FUNCTION</scope>
</reference>
<keyword id="KW-0053">Apoptosis</keyword>
<keyword id="KW-0903">Direct protein sequencing</keyword>
<keyword id="KW-0325">Glycoprotein</keyword>
<keyword id="KW-0472">Membrane</keyword>
<keyword id="KW-1267">Proteomics identification</keyword>
<keyword id="KW-1185">Reference proteome</keyword>
<keyword id="KW-0732">Signal</keyword>
<keyword id="KW-0812">Transmembrane</keyword>
<keyword id="KW-1133">Transmembrane helix</keyword>
<evidence type="ECO:0000255" key="1"/>
<evidence type="ECO:0000255" key="2">
    <source>
        <dbReference type="PROSITE-ProRule" id="PRU00498"/>
    </source>
</evidence>
<evidence type="ECO:0000269" key="3">
    <source>
    </source>
</evidence>
<evidence type="ECO:0000269" key="4">
    <source>
    </source>
</evidence>
<evidence type="ECO:0000305" key="5"/>
<evidence type="ECO:0000305" key="6">
    <source>
    </source>
</evidence>
<feature type="signal peptide" evidence="3">
    <location>
        <begin position="1"/>
        <end position="37"/>
    </location>
</feature>
<feature type="chain" id="PRO_5000060231" description="TM2 domain-containing protein 1">
    <location>
        <begin position="38"/>
        <end position="207"/>
    </location>
</feature>
<feature type="topological domain" description="Extracellular" evidence="5">
    <location>
        <begin position="40"/>
        <end position="128"/>
    </location>
</feature>
<feature type="transmembrane region" description="Helical" evidence="1">
    <location>
        <begin position="129"/>
        <end position="149"/>
    </location>
</feature>
<feature type="topological domain" description="Cytoplasmic" evidence="5">
    <location>
        <begin position="150"/>
        <end position="153"/>
    </location>
</feature>
<feature type="transmembrane region" description="Helical" evidence="1">
    <location>
        <begin position="154"/>
        <end position="174"/>
    </location>
</feature>
<feature type="topological domain" description="Extracellular" evidence="5">
    <location>
        <begin position="175"/>
        <end position="207"/>
    </location>
</feature>
<feature type="domain" description="TM2" evidence="1">
    <location>
        <begin position="118"/>
        <end position="166"/>
    </location>
</feature>
<feature type="glycosylation site" description="N-linked (GlcNAc...) asparagine" evidence="2">
    <location>
        <position position="72"/>
    </location>
</feature>
<feature type="glycosylation site" description="N-linked (GlcNAc...) asparagine" evidence="2">
    <location>
        <position position="75"/>
    </location>
</feature>
<feature type="glycosylation site" description="N-linked (GlcNAc...) asparagine" evidence="2">
    <location>
        <position position="87"/>
    </location>
</feature>
<feature type="glycosylation site" description="N-linked (GlcNAc...) asparagine" evidence="2">
    <location>
        <position position="96"/>
    </location>
</feature>
<feature type="glycosylation site" description="N-linked (GlcNAc...) asparagine" evidence="2">
    <location>
        <position position="197"/>
    </location>
</feature>
<comment type="function">
    <text evidence="3 4">May participate in amyloid-beta-induced apoptosis via its interaction with beta-APP42.</text>
</comment>
<comment type="subunit">
    <text evidence="3">Interacts with APP beta-APP42 (amyloid-beta protein 42).</text>
</comment>
<comment type="interaction">
    <interactant intactId="EBI-25832057">
        <id>Q9BX74</id>
    </interactant>
    <interactant intactId="EBI-25646567">
        <id>Q06481-5</id>
        <label>APLP2</label>
    </interactant>
    <organismsDiffer>false</organismsDiffer>
    <experiments>3</experiments>
</comment>
<comment type="interaction">
    <interactant intactId="EBI-25832057">
        <id>Q9BX74</id>
    </interactant>
    <interactant intactId="EBI-77613">
        <id>P05067</id>
        <label>APP</label>
    </interactant>
    <organismsDiffer>false</organismsDiffer>
    <experiments>3</experiments>
</comment>
<comment type="interaction">
    <interactant intactId="EBI-25832057">
        <id>Q9BX74</id>
    </interactant>
    <interactant intactId="EBI-12248206">
        <id>P29466-3</id>
        <label>CASP1</label>
    </interactant>
    <organismsDiffer>false</organismsDiffer>
    <experiments>3</experiments>
</comment>
<comment type="subcellular location">
    <subcellularLocation>
        <location evidence="3">Membrane</location>
        <topology evidence="3">Multi-pass membrane protein</topology>
    </subcellularLocation>
</comment>
<comment type="tissue specificity">
    <text evidence="3">Widely expressed.</text>
</comment>
<comment type="PTM">
    <text evidence="3">N-glycosylated.</text>
</comment>
<comment type="similarity">
    <text evidence="5">Belongs to the TM2 family.</text>
</comment>
<comment type="caution">
    <text evidence="6">Was originally (PubMed:11278849) thought to modulate amyloid-beta toxicity by coupling to G protein. However, PubMed:12836168 showed that this effect is not direct.</text>
</comment>
<dbReference type="EMBL" id="AF353990">
    <property type="protein sequence ID" value="AAK35064.1"/>
    <property type="molecule type" value="mRNA"/>
</dbReference>
<dbReference type="EMBL" id="AC099791">
    <property type="status" value="NOT_ANNOTATED_CDS"/>
    <property type="molecule type" value="Genomic_DNA"/>
</dbReference>
<dbReference type="EMBL" id="BC029486">
    <property type="protein sequence ID" value="AAH29486.1"/>
    <property type="molecule type" value="mRNA"/>
</dbReference>
<dbReference type="CCDS" id="CCDS65554.1"/>
<dbReference type="RefSeq" id="NP_114416.1">
    <property type="nucleotide sequence ID" value="NM_032027.3"/>
</dbReference>
<dbReference type="BioGRID" id="123824">
    <property type="interactions" value="11"/>
</dbReference>
<dbReference type="FunCoup" id="Q9BX74">
    <property type="interactions" value="1700"/>
</dbReference>
<dbReference type="IntAct" id="Q9BX74">
    <property type="interactions" value="7"/>
</dbReference>
<dbReference type="STRING" id="9606.ENSP00000475700"/>
<dbReference type="GlyConnect" id="1813">
    <property type="glycosylation" value="1 N-Linked glycan (1 site)"/>
</dbReference>
<dbReference type="GlyCosmos" id="Q9BX74">
    <property type="glycosylation" value="4 sites, 1 glycan"/>
</dbReference>
<dbReference type="GlyGen" id="Q9BX74">
    <property type="glycosylation" value="5 sites, 10 N-linked glycans (5 sites)"/>
</dbReference>
<dbReference type="iPTMnet" id="Q9BX74"/>
<dbReference type="PhosphoSitePlus" id="Q9BX74"/>
<dbReference type="BioMuta" id="TM2D1"/>
<dbReference type="DMDM" id="74752423"/>
<dbReference type="jPOST" id="Q9BX74"/>
<dbReference type="MassIVE" id="Q9BX74"/>
<dbReference type="PaxDb" id="9606-ENSP00000475700"/>
<dbReference type="PeptideAtlas" id="Q9BX74"/>
<dbReference type="ProteomicsDB" id="79374"/>
<dbReference type="Antibodypedia" id="46902">
    <property type="antibodies" value="60 antibodies from 17 providers"/>
</dbReference>
<dbReference type="DNASU" id="83941"/>
<dbReference type="Ensembl" id="ENST00000371180.7">
    <property type="protein sequence ID" value="ENSP00000360222.2"/>
    <property type="gene ID" value="ENSG00000162604.13"/>
</dbReference>
<dbReference type="Ensembl" id="ENST00000606498.5">
    <property type="protein sequence ID" value="ENSP00000475700.1"/>
    <property type="gene ID" value="ENSG00000162604.13"/>
</dbReference>
<dbReference type="GeneID" id="83941"/>
<dbReference type="KEGG" id="hsa:83941"/>
<dbReference type="MANE-Select" id="ENST00000606498.5">
    <property type="protein sequence ID" value="ENSP00000475700.1"/>
    <property type="RefSeq nucleotide sequence ID" value="NM_032027.3"/>
    <property type="RefSeq protein sequence ID" value="NP_114416.1"/>
</dbReference>
<dbReference type="UCSC" id="uc001czz.1">
    <property type="organism name" value="human"/>
</dbReference>
<dbReference type="AGR" id="HGNC:24142"/>
<dbReference type="CTD" id="83941"/>
<dbReference type="DisGeNET" id="83941"/>
<dbReference type="GeneCards" id="TM2D1"/>
<dbReference type="HGNC" id="HGNC:24142">
    <property type="gene designation" value="TM2D1"/>
</dbReference>
<dbReference type="HPA" id="ENSG00000162604">
    <property type="expression patterns" value="Low tissue specificity"/>
</dbReference>
<dbReference type="MIM" id="610080">
    <property type="type" value="gene"/>
</dbReference>
<dbReference type="neXtProt" id="NX_Q9BX74"/>
<dbReference type="OpenTargets" id="ENSG00000162604"/>
<dbReference type="PharmGKB" id="PA142670798"/>
<dbReference type="VEuPathDB" id="HostDB:ENSG00000162604"/>
<dbReference type="eggNOG" id="KOG4272">
    <property type="taxonomic scope" value="Eukaryota"/>
</dbReference>
<dbReference type="GeneTree" id="ENSGT00940000157668"/>
<dbReference type="HOGENOM" id="CLU_110523_1_0_1"/>
<dbReference type="InParanoid" id="Q9BX74"/>
<dbReference type="OMA" id="ETFRKPH"/>
<dbReference type="OrthoDB" id="5804096at2759"/>
<dbReference type="PAN-GO" id="Q9BX74">
    <property type="GO annotations" value="3 GO annotations based on evolutionary models"/>
</dbReference>
<dbReference type="PhylomeDB" id="Q9BX74"/>
<dbReference type="PathwayCommons" id="Q9BX74"/>
<dbReference type="SignaLink" id="Q9BX74"/>
<dbReference type="BioGRID-ORCS" id="83941">
    <property type="hits" value="72 hits in 1136 CRISPR screens"/>
</dbReference>
<dbReference type="ChiTaRS" id="TM2D1">
    <property type="organism name" value="human"/>
</dbReference>
<dbReference type="GenomeRNAi" id="83941"/>
<dbReference type="Pharos" id="Q9BX74">
    <property type="development level" value="Tbio"/>
</dbReference>
<dbReference type="PRO" id="PR:Q9BX74"/>
<dbReference type="Proteomes" id="UP000005640">
    <property type="component" value="Chromosome 1"/>
</dbReference>
<dbReference type="RNAct" id="Q9BX74">
    <property type="molecule type" value="protein"/>
</dbReference>
<dbReference type="Bgee" id="ENSG00000162604">
    <property type="expression patterns" value="Expressed in endothelial cell and 203 other cell types or tissues"/>
</dbReference>
<dbReference type="ExpressionAtlas" id="Q9BX74">
    <property type="expression patterns" value="baseline and differential"/>
</dbReference>
<dbReference type="GO" id="GO:0005886">
    <property type="term" value="C:plasma membrane"/>
    <property type="evidence" value="ECO:0007669"/>
    <property type="project" value="Ensembl"/>
</dbReference>
<dbReference type="GO" id="GO:0001540">
    <property type="term" value="F:amyloid-beta binding"/>
    <property type="evidence" value="ECO:0000318"/>
    <property type="project" value="GO_Central"/>
</dbReference>
<dbReference type="GO" id="GO:0004930">
    <property type="term" value="F:G protein-coupled receptor activity"/>
    <property type="evidence" value="ECO:0000318"/>
    <property type="project" value="GO_Central"/>
</dbReference>
<dbReference type="GO" id="GO:0097190">
    <property type="term" value="P:apoptotic signaling pathway"/>
    <property type="evidence" value="ECO:0000318"/>
    <property type="project" value="GO_Central"/>
</dbReference>
<dbReference type="InterPro" id="IPR007829">
    <property type="entry name" value="TM2"/>
</dbReference>
<dbReference type="InterPro" id="IPR050932">
    <property type="entry name" value="TM2D1-3-like"/>
</dbReference>
<dbReference type="PANTHER" id="PTHR21016">
    <property type="entry name" value="BETA-AMYLOID BINDING PROTEIN-RELATED"/>
    <property type="match status" value="1"/>
</dbReference>
<dbReference type="PANTHER" id="PTHR21016:SF1">
    <property type="entry name" value="TM2 DOMAIN-CONTAINING PROTEIN 1"/>
    <property type="match status" value="1"/>
</dbReference>
<dbReference type="Pfam" id="PF05154">
    <property type="entry name" value="TM2"/>
    <property type="match status" value="1"/>
</dbReference>
<proteinExistence type="evidence at protein level"/>
<sequence>MAAAWPSGPSAPEAVTARLVGVLWFVSVTTGPWGAVATSAGGEESLKCEDLKVGQYICKDPKINDATQEPVNCTNYTAHVSCFPAPNITCKDSSGNETHFTGNEVGFFKPISCRNVNGYSYKVAVALSLFLGWLGADRFYLGYPALGLLKFCTVGFCGIGSLIDFILISMQIVGPSDGSSYIIDYYGTRLTRLSITNETFRKTQLYP</sequence>
<gene>
    <name type="primary">TM2D1</name>
    <name type="synonym">BBP</name>
</gene>
<name>TM2D1_HUMAN</name>
<organism>
    <name type="scientific">Homo sapiens</name>
    <name type="common">Human</name>
    <dbReference type="NCBI Taxonomy" id="9606"/>
    <lineage>
        <taxon>Eukaryota</taxon>
        <taxon>Metazoa</taxon>
        <taxon>Chordata</taxon>
        <taxon>Craniata</taxon>
        <taxon>Vertebrata</taxon>
        <taxon>Euteleostomi</taxon>
        <taxon>Mammalia</taxon>
        <taxon>Eutheria</taxon>
        <taxon>Euarchontoglires</taxon>
        <taxon>Primates</taxon>
        <taxon>Haplorrhini</taxon>
        <taxon>Catarrhini</taxon>
        <taxon>Hominidae</taxon>
        <taxon>Homo</taxon>
    </lineage>
</organism>
<protein>
    <recommendedName>
        <fullName>TM2 domain-containing protein 1</fullName>
    </recommendedName>
    <alternativeName>
        <fullName>Amyloid-beta-binding protein</fullName>
        <shortName>hBBP</shortName>
    </alternativeName>
</protein>
<accession>Q9BX74</accession>
<accession>A6NDA8</accession>